<organism>
    <name type="scientific">Rattus norvegicus</name>
    <name type="common">Rat</name>
    <dbReference type="NCBI Taxonomy" id="10116"/>
    <lineage>
        <taxon>Eukaryota</taxon>
        <taxon>Metazoa</taxon>
        <taxon>Chordata</taxon>
        <taxon>Craniata</taxon>
        <taxon>Vertebrata</taxon>
        <taxon>Euteleostomi</taxon>
        <taxon>Mammalia</taxon>
        <taxon>Eutheria</taxon>
        <taxon>Euarchontoglires</taxon>
        <taxon>Glires</taxon>
        <taxon>Rodentia</taxon>
        <taxon>Myomorpha</taxon>
        <taxon>Muroidea</taxon>
        <taxon>Muridae</taxon>
        <taxon>Murinae</taxon>
        <taxon>Rattus</taxon>
    </lineage>
</organism>
<proteinExistence type="evidence at protein level"/>
<protein>
    <recommendedName>
        <fullName>Neuromedin-U receptor 1</fullName>
        <shortName>NMU-R1</shortName>
    </recommendedName>
    <alternativeName>
        <fullName>G-protein coupled receptor 66</fullName>
    </alternativeName>
    <alternativeName>
        <fullName>G-protein coupled receptor FM-3</fullName>
    </alternativeName>
</protein>
<reference key="1">
    <citation type="journal article" date="2004" name="Nature">
        <title>Genome sequence of the Brown Norway rat yields insights into mammalian evolution.</title>
        <authorList>
            <person name="Gibbs R.A."/>
            <person name="Weinstock G.M."/>
            <person name="Metzker M.L."/>
            <person name="Muzny D.M."/>
            <person name="Sodergren E.J."/>
            <person name="Scherer S."/>
            <person name="Scott G."/>
            <person name="Steffen D."/>
            <person name="Worley K.C."/>
            <person name="Burch P.E."/>
            <person name="Okwuonu G."/>
            <person name="Hines S."/>
            <person name="Lewis L."/>
            <person name="Deramo C."/>
            <person name="Delgado O."/>
            <person name="Dugan-Rocha S."/>
            <person name="Miner G."/>
            <person name="Morgan M."/>
            <person name="Hawes A."/>
            <person name="Gill R."/>
            <person name="Holt R.A."/>
            <person name="Adams M.D."/>
            <person name="Amanatides P.G."/>
            <person name="Baden-Tillson H."/>
            <person name="Barnstead M."/>
            <person name="Chin S."/>
            <person name="Evans C.A."/>
            <person name="Ferriera S."/>
            <person name="Fosler C."/>
            <person name="Glodek A."/>
            <person name="Gu Z."/>
            <person name="Jennings D."/>
            <person name="Kraft C.L."/>
            <person name="Nguyen T."/>
            <person name="Pfannkoch C.M."/>
            <person name="Sitter C."/>
            <person name="Sutton G.G."/>
            <person name="Venter J.C."/>
            <person name="Woodage T."/>
            <person name="Smith D."/>
            <person name="Lee H.-M."/>
            <person name="Gustafson E."/>
            <person name="Cahill P."/>
            <person name="Kana A."/>
            <person name="Doucette-Stamm L."/>
            <person name="Weinstock K."/>
            <person name="Fechtel K."/>
            <person name="Weiss R.B."/>
            <person name="Dunn D.M."/>
            <person name="Green E.D."/>
            <person name="Blakesley R.W."/>
            <person name="Bouffard G.G."/>
            <person name="De Jong P.J."/>
            <person name="Osoegawa K."/>
            <person name="Zhu B."/>
            <person name="Marra M."/>
            <person name="Schein J."/>
            <person name="Bosdet I."/>
            <person name="Fjell C."/>
            <person name="Jones S."/>
            <person name="Krzywinski M."/>
            <person name="Mathewson C."/>
            <person name="Siddiqui A."/>
            <person name="Wye N."/>
            <person name="McPherson J."/>
            <person name="Zhao S."/>
            <person name="Fraser C.M."/>
            <person name="Shetty J."/>
            <person name="Shatsman S."/>
            <person name="Geer K."/>
            <person name="Chen Y."/>
            <person name="Abramzon S."/>
            <person name="Nierman W.C."/>
            <person name="Havlak P.H."/>
            <person name="Chen R."/>
            <person name="Durbin K.J."/>
            <person name="Egan A."/>
            <person name="Ren Y."/>
            <person name="Song X.-Z."/>
            <person name="Li B."/>
            <person name="Liu Y."/>
            <person name="Qin X."/>
            <person name="Cawley S."/>
            <person name="Cooney A.J."/>
            <person name="D'Souza L.M."/>
            <person name="Martin K."/>
            <person name="Wu J.Q."/>
            <person name="Gonzalez-Garay M.L."/>
            <person name="Jackson A.R."/>
            <person name="Kalafus K.J."/>
            <person name="McLeod M.P."/>
            <person name="Milosavljevic A."/>
            <person name="Virk D."/>
            <person name="Volkov A."/>
            <person name="Wheeler D.A."/>
            <person name="Zhang Z."/>
            <person name="Bailey J.A."/>
            <person name="Eichler E.E."/>
            <person name="Tuzun E."/>
            <person name="Birney E."/>
            <person name="Mongin E."/>
            <person name="Ureta-Vidal A."/>
            <person name="Woodwark C."/>
            <person name="Zdobnov E."/>
            <person name="Bork P."/>
            <person name="Suyama M."/>
            <person name="Torrents D."/>
            <person name="Alexandersson M."/>
            <person name="Trask B.J."/>
            <person name="Young J.M."/>
            <person name="Huang H."/>
            <person name="Wang H."/>
            <person name="Xing H."/>
            <person name="Daniels S."/>
            <person name="Gietzen D."/>
            <person name="Schmidt J."/>
            <person name="Stevens K."/>
            <person name="Vitt U."/>
            <person name="Wingrove J."/>
            <person name="Camara F."/>
            <person name="Mar Alba M."/>
            <person name="Abril J.F."/>
            <person name="Guigo R."/>
            <person name="Smit A."/>
            <person name="Dubchak I."/>
            <person name="Rubin E.M."/>
            <person name="Couronne O."/>
            <person name="Poliakov A."/>
            <person name="Huebner N."/>
            <person name="Ganten D."/>
            <person name="Goesele C."/>
            <person name="Hummel O."/>
            <person name="Kreitler T."/>
            <person name="Lee Y.-A."/>
            <person name="Monti J."/>
            <person name="Schulz H."/>
            <person name="Zimdahl H."/>
            <person name="Himmelbauer H."/>
            <person name="Lehrach H."/>
            <person name="Jacob H.J."/>
            <person name="Bromberg S."/>
            <person name="Gullings-Handley J."/>
            <person name="Jensen-Seaman M.I."/>
            <person name="Kwitek A.E."/>
            <person name="Lazar J."/>
            <person name="Pasko D."/>
            <person name="Tonellato P.J."/>
            <person name="Twigger S."/>
            <person name="Ponting C.P."/>
            <person name="Duarte J.M."/>
            <person name="Rice S."/>
            <person name="Goodstadt L."/>
            <person name="Beatson S.A."/>
            <person name="Emes R.D."/>
            <person name="Winter E.E."/>
            <person name="Webber C."/>
            <person name="Brandt P."/>
            <person name="Nyakatura G."/>
            <person name="Adetobi M."/>
            <person name="Chiaromonte F."/>
            <person name="Elnitski L."/>
            <person name="Eswara P."/>
            <person name="Hardison R.C."/>
            <person name="Hou M."/>
            <person name="Kolbe D."/>
            <person name="Makova K."/>
            <person name="Miller W."/>
            <person name="Nekrutenko A."/>
            <person name="Riemer C."/>
            <person name="Schwartz S."/>
            <person name="Taylor J."/>
            <person name="Yang S."/>
            <person name="Zhang Y."/>
            <person name="Lindpaintner K."/>
            <person name="Andrews T.D."/>
            <person name="Caccamo M."/>
            <person name="Clamp M."/>
            <person name="Clarke L."/>
            <person name="Curwen V."/>
            <person name="Durbin R.M."/>
            <person name="Eyras E."/>
            <person name="Searle S.M."/>
            <person name="Cooper G.M."/>
            <person name="Batzoglou S."/>
            <person name="Brudno M."/>
            <person name="Sidow A."/>
            <person name="Stone E.A."/>
            <person name="Payseur B.A."/>
            <person name="Bourque G."/>
            <person name="Lopez-Otin C."/>
            <person name="Puente X.S."/>
            <person name="Chakrabarti K."/>
            <person name="Chatterji S."/>
            <person name="Dewey C."/>
            <person name="Pachter L."/>
            <person name="Bray N."/>
            <person name="Yap V.B."/>
            <person name="Caspi A."/>
            <person name="Tesler G."/>
            <person name="Pevzner P.A."/>
            <person name="Haussler D."/>
            <person name="Roskin K.M."/>
            <person name="Baertsch R."/>
            <person name="Clawson H."/>
            <person name="Furey T.S."/>
            <person name="Hinrichs A.S."/>
            <person name="Karolchik D."/>
            <person name="Kent W.J."/>
            <person name="Rosenbloom K.R."/>
            <person name="Trumbower H."/>
            <person name="Weirauch M."/>
            <person name="Cooper D.N."/>
            <person name="Stenson P.D."/>
            <person name="Ma B."/>
            <person name="Brent M."/>
            <person name="Arumugam M."/>
            <person name="Shteynberg D."/>
            <person name="Copley R.R."/>
            <person name="Taylor M.S."/>
            <person name="Riethman H."/>
            <person name="Mudunuri U."/>
            <person name="Peterson J."/>
            <person name="Guyer M."/>
            <person name="Felsenfeld A."/>
            <person name="Old S."/>
            <person name="Mockrin S."/>
            <person name="Collins F.S."/>
        </authorList>
    </citation>
    <scope>NUCLEOTIDE SEQUENCE [LARGE SCALE GENOMIC DNA]</scope>
    <source>
        <strain>Brown Norway</strain>
    </source>
</reference>
<reference key="2">
    <citation type="journal article" date="2000" name="J. Biol. Chem.">
        <title>Identification of neuromedin U as the cognate ligand of the orphan G protein-coupled receptor FM-3.</title>
        <authorList>
            <person name="Fujii R."/>
            <person name="Hosoya M."/>
            <person name="Fukusumi S."/>
            <person name="Kawamata Y."/>
            <person name="Habata Y."/>
            <person name="Hinuma S."/>
            <person name="Onda H."/>
            <person name="Nishimura O."/>
            <person name="Fujino M."/>
        </authorList>
    </citation>
    <scope>NUCLEOTIDE SEQUENCE [MRNA] OF 14-425</scope>
    <scope>FUNCTION</scope>
    <scope>TISSUE SPECIFICITY</scope>
</reference>
<reference key="3">
    <citation type="journal article" date="2000" name="Nature">
        <title>Identification of receptors for neuromedin U and its role in feeding.</title>
        <authorList>
            <person name="Howard A.D."/>
            <person name="Wang R."/>
            <person name="Pong S.-S."/>
            <person name="Mellin T.N."/>
            <person name="Strack A."/>
            <person name="Guan X.-M."/>
            <person name="Zeng Z."/>
            <person name="Williams D.L."/>
            <person name="Feighner S.D."/>
            <person name="Nunes C.N."/>
            <person name="Murphy B."/>
            <person name="Stair J.N."/>
            <person name="Yu H."/>
            <person name="Jiang Q."/>
            <person name="Clements M.K."/>
            <person name="Tan C.P."/>
            <person name="Mckee K.K."/>
            <person name="Hreniuk D.L."/>
            <person name="Mcdonald T.P."/>
            <person name="Lynch K.R."/>
            <person name="Evans J.F."/>
            <person name="Austin C.P."/>
            <person name="Caskey T."/>
            <person name="van der Ploeg L.H.T."/>
            <person name="Liu Q."/>
        </authorList>
    </citation>
    <scope>NUCLEOTIDE SEQUENCE [MRNA] OF 24-425</scope>
    <source>
        <strain>Sprague-Dawley</strain>
    </source>
</reference>
<reference key="4">
    <citation type="journal article" date="2005" name="EMBO J.">
        <title>Identification of neuromedin S and its possible role in the mammalian circadian oscillator system.</title>
        <authorList>
            <person name="Mori K."/>
            <person name="Miyazato M."/>
            <person name="Ida T."/>
            <person name="Murakami N."/>
            <person name="Serino R."/>
            <person name="Ueta Y."/>
            <person name="Kojima M."/>
            <person name="Kangawa K."/>
        </authorList>
    </citation>
    <scope>FUNCTION AS A NEUROMEDIN-S RECEPTOR</scope>
</reference>
<gene>
    <name type="primary">Nmur1</name>
    <name type="synonym">Gpr66</name>
</gene>
<keyword id="KW-1003">Cell membrane</keyword>
<keyword id="KW-1015">Disulfide bond</keyword>
<keyword id="KW-0297">G-protein coupled receptor</keyword>
<keyword id="KW-0325">Glycoprotein</keyword>
<keyword id="KW-0472">Membrane</keyword>
<keyword id="KW-0675">Receptor</keyword>
<keyword id="KW-1185">Reference proteome</keyword>
<keyword id="KW-0807">Transducer</keyword>
<keyword id="KW-0812">Transmembrane</keyword>
<keyword id="KW-1133">Transmembrane helix</keyword>
<sequence length="425" mass="48129">MTPPCLNCSFFPGQLSPNASTGLLSCNDSEFKEHFDLEDLNLTHEDLRLKYLGPQQVKQFLPICVTYLLIFVVGTLGNGLTCTVILRQKAMHTPTNFYLFSLAVSDLLVLLVGLPLELYEMQHNYPFQLGAGGCYFRILLLETVCLASVLNVTALSVERYVAVVHPLQAKSVMTRTHVRRMLGAIWVFAILFSLPNTSLHGLSPLYVPCRGPVPDSVTCTLVRPQFFYKLVIQTTILLFFCLPMVTISVLYLLIGLRLRRERILLQEEVKGRISAAARQASHRSIQLRDRERRQVTKMLIALVIVFGTCWVPFHADRLMWSMVSHWTDGLRLAFQSVHLASGVFLYLGSAANPVLYNLMSTRFRESFRETLGLGTRCCHRHQPRHDSHSHLRLTTVSTLCDRNSRDVPLAENRDPGCEQETDPPE</sequence>
<feature type="chain" id="PRO_0000069908" description="Neuromedin-U receptor 1">
    <location>
        <begin position="1"/>
        <end position="425"/>
    </location>
</feature>
<feature type="topological domain" description="Extracellular" evidence="1">
    <location>
        <begin position="1"/>
        <end position="59"/>
    </location>
</feature>
<feature type="transmembrane region" description="Helical; Name=1" evidence="1">
    <location>
        <begin position="60"/>
        <end position="80"/>
    </location>
</feature>
<feature type="topological domain" description="Cytoplasmic" evidence="1">
    <location>
        <begin position="81"/>
        <end position="96"/>
    </location>
</feature>
<feature type="transmembrane region" description="Helical; Name=2" evidence="1">
    <location>
        <begin position="97"/>
        <end position="117"/>
    </location>
</feature>
<feature type="topological domain" description="Extracellular" evidence="1">
    <location>
        <begin position="118"/>
        <end position="137"/>
    </location>
</feature>
<feature type="transmembrane region" description="Helical; Name=3" evidence="1">
    <location>
        <begin position="138"/>
        <end position="158"/>
    </location>
</feature>
<feature type="topological domain" description="Cytoplasmic" evidence="1">
    <location>
        <begin position="159"/>
        <end position="181"/>
    </location>
</feature>
<feature type="transmembrane region" description="Helical; Name=4" evidence="1">
    <location>
        <begin position="182"/>
        <end position="202"/>
    </location>
</feature>
<feature type="topological domain" description="Extracellular" evidence="1">
    <location>
        <begin position="203"/>
        <end position="235"/>
    </location>
</feature>
<feature type="transmembrane region" description="Helical; Name=5" evidence="1">
    <location>
        <begin position="236"/>
        <end position="256"/>
    </location>
</feature>
<feature type="topological domain" description="Cytoplasmic" evidence="1">
    <location>
        <begin position="257"/>
        <end position="294"/>
    </location>
</feature>
<feature type="transmembrane region" description="Helical; Name=6" evidence="1">
    <location>
        <begin position="295"/>
        <end position="315"/>
    </location>
</feature>
<feature type="topological domain" description="Extracellular" evidence="1">
    <location>
        <begin position="316"/>
        <end position="331"/>
    </location>
</feature>
<feature type="transmembrane region" description="Helical; Name=7" evidence="1">
    <location>
        <begin position="332"/>
        <end position="352"/>
    </location>
</feature>
<feature type="topological domain" description="Cytoplasmic" evidence="1">
    <location>
        <begin position="353"/>
        <end position="425"/>
    </location>
</feature>
<feature type="region of interest" description="Disordered" evidence="3">
    <location>
        <begin position="406"/>
        <end position="425"/>
    </location>
</feature>
<feature type="glycosylation site" description="N-linked (GlcNAc...) asparagine" evidence="1">
    <location>
        <position position="41"/>
    </location>
</feature>
<feature type="disulfide bond" evidence="2">
    <location>
        <begin position="134"/>
        <end position="219"/>
    </location>
</feature>
<feature type="sequence conflict" description="In Ref. 2; BAA99387." evidence="6" ref="2">
    <original>Q</original>
    <variation>M</variation>
    <location>
        <position position="14"/>
    </location>
</feature>
<feature type="sequence conflict" description="In Ref. 2; BAA99387." evidence="6" ref="2">
    <original>I</original>
    <variation>M</variation>
    <location>
        <position position="263"/>
    </location>
</feature>
<feature type="sequence conflict" description="In Ref. 2; BAA99387." evidence="6" ref="2">
    <original>V</original>
    <variation>E</variation>
    <location>
        <position position="354"/>
    </location>
</feature>
<comment type="function">
    <text evidence="4 5">Receptor for the neuromedin-U and neuromedin-S neuropeptides.</text>
</comment>
<comment type="subcellular location">
    <subcellularLocation>
        <location>Cell membrane</location>
        <topology>Multi-pass membrane protein</topology>
    </subcellularLocation>
</comment>
<comment type="tissue specificity">
    <text evidence="4">Highly expressed in the small intestine and lung. Low expression in the central nervous system.</text>
</comment>
<comment type="similarity">
    <text evidence="2">Belongs to the G-protein coupled receptor 1 family.</text>
</comment>
<evidence type="ECO:0000255" key="1"/>
<evidence type="ECO:0000255" key="2">
    <source>
        <dbReference type="PROSITE-ProRule" id="PRU00521"/>
    </source>
</evidence>
<evidence type="ECO:0000256" key="3">
    <source>
        <dbReference type="SAM" id="MobiDB-lite"/>
    </source>
</evidence>
<evidence type="ECO:0000269" key="4">
    <source>
    </source>
</evidence>
<evidence type="ECO:0000269" key="5">
    <source>
    </source>
</evidence>
<evidence type="ECO:0000305" key="6"/>
<name>NMUR1_RAT</name>
<accession>Q9JJI5</accession>
<accession>F1LQC9</accession>
<accession>Q9JIB2</accession>
<dbReference type="EMBL" id="AC112440">
    <property type="status" value="NOT_ANNOTATED_CDS"/>
    <property type="molecule type" value="Genomic_DNA"/>
</dbReference>
<dbReference type="EMBL" id="AB038649">
    <property type="protein sequence ID" value="BAA99387.1"/>
    <property type="molecule type" value="mRNA"/>
</dbReference>
<dbReference type="EMBL" id="AF242873">
    <property type="protein sequence ID" value="AAF82754.1"/>
    <property type="molecule type" value="mRNA"/>
</dbReference>
<dbReference type="SMR" id="Q9JJI5"/>
<dbReference type="FunCoup" id="Q9JJI5">
    <property type="interactions" value="176"/>
</dbReference>
<dbReference type="STRING" id="10116.ENSRNOP00000025024"/>
<dbReference type="GlyCosmos" id="Q9JJI5">
    <property type="glycosylation" value="1 site, No reported glycans"/>
</dbReference>
<dbReference type="GlyGen" id="Q9JJI5">
    <property type="glycosylation" value="1 site"/>
</dbReference>
<dbReference type="PhosphoSitePlus" id="Q9JJI5"/>
<dbReference type="PaxDb" id="10116-ENSRNOP00000025024"/>
<dbReference type="UCSC" id="RGD:619867">
    <property type="organism name" value="rat"/>
</dbReference>
<dbReference type="AGR" id="RGD:619867"/>
<dbReference type="RGD" id="619867">
    <property type="gene designation" value="Nmur1"/>
</dbReference>
<dbReference type="eggNOG" id="KOG3656">
    <property type="taxonomic scope" value="Eukaryota"/>
</dbReference>
<dbReference type="InParanoid" id="Q9JJI5"/>
<dbReference type="TreeFam" id="TF318522"/>
<dbReference type="Reactome" id="R-RNO-375276">
    <property type="pathway name" value="Peptide ligand-binding receptors"/>
</dbReference>
<dbReference type="Reactome" id="R-RNO-416476">
    <property type="pathway name" value="G alpha (q) signalling events"/>
</dbReference>
<dbReference type="Reactome" id="R-RNO-418594">
    <property type="pathway name" value="G alpha (i) signalling events"/>
</dbReference>
<dbReference type="PRO" id="PR:Q9JJI5"/>
<dbReference type="Proteomes" id="UP000002494">
    <property type="component" value="Unplaced"/>
</dbReference>
<dbReference type="GO" id="GO:0005929">
    <property type="term" value="C:cilium"/>
    <property type="evidence" value="ECO:0000266"/>
    <property type="project" value="RGD"/>
</dbReference>
<dbReference type="GO" id="GO:0016020">
    <property type="term" value="C:membrane"/>
    <property type="evidence" value="ECO:0000266"/>
    <property type="project" value="RGD"/>
</dbReference>
<dbReference type="GO" id="GO:0005886">
    <property type="term" value="C:plasma membrane"/>
    <property type="evidence" value="ECO:0000318"/>
    <property type="project" value="GO_Central"/>
</dbReference>
<dbReference type="GO" id="GO:0042924">
    <property type="term" value="F:neuromedin U binding"/>
    <property type="evidence" value="ECO:0000266"/>
    <property type="project" value="RGD"/>
</dbReference>
<dbReference type="GO" id="GO:0001607">
    <property type="term" value="F:neuromedin U receptor activity"/>
    <property type="evidence" value="ECO:0000266"/>
    <property type="project" value="RGD"/>
</dbReference>
<dbReference type="GO" id="GO:0008188">
    <property type="term" value="F:neuropeptide receptor activity"/>
    <property type="evidence" value="ECO:0000266"/>
    <property type="project" value="RGD"/>
</dbReference>
<dbReference type="GO" id="GO:0019722">
    <property type="term" value="P:calcium-mediated signaling"/>
    <property type="evidence" value="ECO:0000266"/>
    <property type="project" value="RGD"/>
</dbReference>
<dbReference type="GO" id="GO:0006821">
    <property type="term" value="P:chloride transport"/>
    <property type="evidence" value="ECO:0000266"/>
    <property type="project" value="RGD"/>
</dbReference>
<dbReference type="GO" id="GO:0007218">
    <property type="term" value="P:neuropeptide signaling pathway"/>
    <property type="evidence" value="ECO:0000266"/>
    <property type="project" value="RGD"/>
</dbReference>
<dbReference type="GO" id="GO:0007200">
    <property type="term" value="P:phospholipase C-activating G protein-coupled receptor signaling pathway"/>
    <property type="evidence" value="ECO:0000266"/>
    <property type="project" value="RGD"/>
</dbReference>
<dbReference type="GO" id="GO:0050850">
    <property type="term" value="P:positive regulation of calcium-mediated signaling"/>
    <property type="evidence" value="ECO:0000266"/>
    <property type="project" value="RGD"/>
</dbReference>
<dbReference type="GO" id="GO:0006939">
    <property type="term" value="P:smooth muscle contraction"/>
    <property type="evidence" value="ECO:0000266"/>
    <property type="project" value="RGD"/>
</dbReference>
<dbReference type="FunFam" id="1.20.1070.10:FF:000214">
    <property type="entry name" value="Neuromedin U receptor 1"/>
    <property type="match status" value="1"/>
</dbReference>
<dbReference type="Gene3D" id="1.20.1070.10">
    <property type="entry name" value="Rhodopsin 7-helix transmembrane proteins"/>
    <property type="match status" value="1"/>
</dbReference>
<dbReference type="InterPro" id="IPR000276">
    <property type="entry name" value="GPCR_Rhodpsn"/>
</dbReference>
<dbReference type="InterPro" id="IPR017452">
    <property type="entry name" value="GPCR_Rhodpsn_7TM"/>
</dbReference>
<dbReference type="InterPro" id="IPR005390">
    <property type="entry name" value="NeuromedU_rcpt"/>
</dbReference>
<dbReference type="InterPro" id="IPR005391">
    <property type="entry name" value="NeuromedU_rcpt_1"/>
</dbReference>
<dbReference type="PANTHER" id="PTHR24243">
    <property type="entry name" value="G-PROTEIN COUPLED RECEPTOR"/>
    <property type="match status" value="1"/>
</dbReference>
<dbReference type="PANTHER" id="PTHR24243:SF109">
    <property type="entry name" value="NEUROMEDIN-U RECEPTOR 1"/>
    <property type="match status" value="1"/>
</dbReference>
<dbReference type="Pfam" id="PF00001">
    <property type="entry name" value="7tm_1"/>
    <property type="match status" value="1"/>
</dbReference>
<dbReference type="PRINTS" id="PR00237">
    <property type="entry name" value="GPCRRHODOPSN"/>
</dbReference>
<dbReference type="PRINTS" id="PR01565">
    <property type="entry name" value="NEUROMEDINUR"/>
</dbReference>
<dbReference type="PRINTS" id="PR01566">
    <property type="entry name" value="NEUROMEDNU1R"/>
</dbReference>
<dbReference type="SUPFAM" id="SSF81321">
    <property type="entry name" value="Family A G protein-coupled receptor-like"/>
    <property type="match status" value="1"/>
</dbReference>
<dbReference type="PROSITE" id="PS00237">
    <property type="entry name" value="G_PROTEIN_RECEP_F1_1"/>
    <property type="match status" value="1"/>
</dbReference>
<dbReference type="PROSITE" id="PS50262">
    <property type="entry name" value="G_PROTEIN_RECEP_F1_2"/>
    <property type="match status" value="1"/>
</dbReference>